<sequence length="284" mass="30374">MKACGFDIGLEHPFFLIAGPCVIESRELAFDTAGRLKEITSRLGIPFIYKSSFDKANRSSGKSFRGLGIDEGLKILADVRDQVGVPVLTDVHETEQVEPVAAVVDMLQTPAFLCRQTDFIRACAASLKPVNIKKGQFLAPHDMVQVAQKARDAAIEAGGDGSNILVCERGASFGYNNLVSDMRSLAIMRETGCPVVFDATHSVQLPGGQGTSSGGQREFVPVLARAAVAVGVSGLFMETHPNPACALSDGPNAVPLDLMPALLESLVELDRVTKRNGFVENQFI</sequence>
<reference key="1">
    <citation type="journal article" date="2008" name="BMC Genomics">
        <title>The missing link: Bordetella petrii is endowed with both the metabolic versatility of environmental bacteria and virulence traits of pathogenic Bordetellae.</title>
        <authorList>
            <person name="Gross R."/>
            <person name="Guzman C.A."/>
            <person name="Sebaihia M."/>
            <person name="Martin dos Santos V.A.P."/>
            <person name="Pieper D.H."/>
            <person name="Koebnik R."/>
            <person name="Lechner M."/>
            <person name="Bartels D."/>
            <person name="Buhrmester J."/>
            <person name="Choudhuri J.V."/>
            <person name="Ebensen T."/>
            <person name="Gaigalat L."/>
            <person name="Herrmann S."/>
            <person name="Khachane A.N."/>
            <person name="Larisch C."/>
            <person name="Link S."/>
            <person name="Linke B."/>
            <person name="Meyer F."/>
            <person name="Mormann S."/>
            <person name="Nakunst D."/>
            <person name="Rueckert C."/>
            <person name="Schneiker-Bekel S."/>
            <person name="Schulze K."/>
            <person name="Voerholter F.-J."/>
            <person name="Yevsa T."/>
            <person name="Engle J.T."/>
            <person name="Goldman W.E."/>
            <person name="Puehler A."/>
            <person name="Goebel U.B."/>
            <person name="Goesmann A."/>
            <person name="Bloecker H."/>
            <person name="Kaiser O."/>
            <person name="Martinez-Arias R."/>
        </authorList>
    </citation>
    <scope>NUCLEOTIDE SEQUENCE [LARGE SCALE GENOMIC DNA]</scope>
    <source>
        <strain>ATCC BAA-461 / DSM 12804 / CCUG 43448</strain>
    </source>
</reference>
<keyword id="KW-0963">Cytoplasm</keyword>
<keyword id="KW-0448">Lipopolysaccharide biosynthesis</keyword>
<keyword id="KW-0808">Transferase</keyword>
<dbReference type="EC" id="2.5.1.55" evidence="1"/>
<dbReference type="EMBL" id="AM902716">
    <property type="protein sequence ID" value="CAP42140.1"/>
    <property type="molecule type" value="Genomic_DNA"/>
</dbReference>
<dbReference type="SMR" id="A9IIP6"/>
<dbReference type="STRING" id="94624.Bpet1801"/>
<dbReference type="KEGG" id="bpt:Bpet1801"/>
<dbReference type="eggNOG" id="COG2877">
    <property type="taxonomic scope" value="Bacteria"/>
</dbReference>
<dbReference type="UniPathway" id="UPA00030"/>
<dbReference type="UniPathway" id="UPA00357">
    <property type="reaction ID" value="UER00474"/>
</dbReference>
<dbReference type="Proteomes" id="UP000001225">
    <property type="component" value="Chromosome"/>
</dbReference>
<dbReference type="GO" id="GO:0005737">
    <property type="term" value="C:cytoplasm"/>
    <property type="evidence" value="ECO:0007669"/>
    <property type="project" value="UniProtKB-SubCell"/>
</dbReference>
<dbReference type="GO" id="GO:0008676">
    <property type="term" value="F:3-deoxy-8-phosphooctulonate synthase activity"/>
    <property type="evidence" value="ECO:0007669"/>
    <property type="project" value="UniProtKB-UniRule"/>
</dbReference>
<dbReference type="GO" id="GO:0019294">
    <property type="term" value="P:keto-3-deoxy-D-manno-octulosonic acid biosynthetic process"/>
    <property type="evidence" value="ECO:0007669"/>
    <property type="project" value="UniProtKB-UniRule"/>
</dbReference>
<dbReference type="Gene3D" id="3.20.20.70">
    <property type="entry name" value="Aldolase class I"/>
    <property type="match status" value="1"/>
</dbReference>
<dbReference type="HAMAP" id="MF_00056">
    <property type="entry name" value="KDO8P_synth"/>
    <property type="match status" value="1"/>
</dbReference>
<dbReference type="InterPro" id="IPR013785">
    <property type="entry name" value="Aldolase_TIM"/>
</dbReference>
<dbReference type="InterPro" id="IPR006218">
    <property type="entry name" value="DAHP1/KDSA"/>
</dbReference>
<dbReference type="InterPro" id="IPR006269">
    <property type="entry name" value="KDO8P_synthase"/>
</dbReference>
<dbReference type="NCBIfam" id="TIGR01362">
    <property type="entry name" value="KDO8P_synth"/>
    <property type="match status" value="1"/>
</dbReference>
<dbReference type="NCBIfam" id="NF003543">
    <property type="entry name" value="PRK05198.1"/>
    <property type="match status" value="1"/>
</dbReference>
<dbReference type="PANTHER" id="PTHR21057">
    <property type="entry name" value="PHOSPHO-2-DEHYDRO-3-DEOXYHEPTONATE ALDOLASE"/>
    <property type="match status" value="1"/>
</dbReference>
<dbReference type="Pfam" id="PF00793">
    <property type="entry name" value="DAHP_synth_1"/>
    <property type="match status" value="1"/>
</dbReference>
<dbReference type="SUPFAM" id="SSF51569">
    <property type="entry name" value="Aldolase"/>
    <property type="match status" value="1"/>
</dbReference>
<gene>
    <name evidence="1" type="primary">kdsA</name>
    <name type="ordered locus">Bpet1801</name>
</gene>
<feature type="chain" id="PRO_1000091798" description="2-dehydro-3-deoxyphosphooctonate aldolase">
    <location>
        <begin position="1"/>
        <end position="284"/>
    </location>
</feature>
<accession>A9IIP6</accession>
<evidence type="ECO:0000255" key="1">
    <source>
        <dbReference type="HAMAP-Rule" id="MF_00056"/>
    </source>
</evidence>
<comment type="catalytic activity">
    <reaction evidence="1">
        <text>D-arabinose 5-phosphate + phosphoenolpyruvate + H2O = 3-deoxy-alpha-D-manno-2-octulosonate-8-phosphate + phosphate</text>
        <dbReference type="Rhea" id="RHEA:14053"/>
        <dbReference type="ChEBI" id="CHEBI:15377"/>
        <dbReference type="ChEBI" id="CHEBI:43474"/>
        <dbReference type="ChEBI" id="CHEBI:57693"/>
        <dbReference type="ChEBI" id="CHEBI:58702"/>
        <dbReference type="ChEBI" id="CHEBI:85985"/>
        <dbReference type="EC" id="2.5.1.55"/>
    </reaction>
</comment>
<comment type="pathway">
    <text evidence="1">Carbohydrate biosynthesis; 3-deoxy-D-manno-octulosonate biosynthesis; 3-deoxy-D-manno-octulosonate from D-ribulose 5-phosphate: step 2/3.</text>
</comment>
<comment type="pathway">
    <text evidence="1">Bacterial outer membrane biogenesis; lipopolysaccharide biosynthesis.</text>
</comment>
<comment type="subcellular location">
    <subcellularLocation>
        <location evidence="1">Cytoplasm</location>
    </subcellularLocation>
</comment>
<comment type="similarity">
    <text evidence="1">Belongs to the KdsA family.</text>
</comment>
<name>KDSA_BORPD</name>
<organism>
    <name type="scientific">Bordetella petrii (strain ATCC BAA-461 / DSM 12804 / CCUG 43448)</name>
    <dbReference type="NCBI Taxonomy" id="340100"/>
    <lineage>
        <taxon>Bacteria</taxon>
        <taxon>Pseudomonadati</taxon>
        <taxon>Pseudomonadota</taxon>
        <taxon>Betaproteobacteria</taxon>
        <taxon>Burkholderiales</taxon>
        <taxon>Alcaligenaceae</taxon>
        <taxon>Bordetella</taxon>
    </lineage>
</organism>
<proteinExistence type="inferred from homology"/>
<protein>
    <recommendedName>
        <fullName evidence="1">2-dehydro-3-deoxyphosphooctonate aldolase</fullName>
        <ecNumber evidence="1">2.5.1.55</ecNumber>
    </recommendedName>
    <alternativeName>
        <fullName evidence="1">3-deoxy-D-manno-octulosonic acid 8-phosphate synthase</fullName>
    </alternativeName>
    <alternativeName>
        <fullName evidence="1">KDO-8-phosphate synthase</fullName>
        <shortName evidence="1">KDO 8-P synthase</shortName>
        <shortName evidence="1">KDOPS</shortName>
    </alternativeName>
    <alternativeName>
        <fullName evidence="1">Phospho-2-dehydro-3-deoxyoctonate aldolase</fullName>
    </alternativeName>
</protein>